<gene>
    <name evidence="1" type="primary">moaC</name>
    <name type="ordered locus">BcerKBAB4_4554</name>
</gene>
<accession>A9VL86</accession>
<sequence length="161" mass="17578">MSSFTHFNDQGRAKMVDISDKKITVRTAIACSSILVTKEIFDKISHNEIGKGDVLAVAQIAGIMAAKRTSDIIPMCHPLLLKGVDVSFDWKQSEEQYRLLIEVKVKTEGSTGVEMEALTAASATALTVYDMCKAVDKGMIIGETYLLEKTGGKNGDYIRNS</sequence>
<dbReference type="EC" id="4.6.1.17" evidence="1"/>
<dbReference type="EMBL" id="CP000903">
    <property type="protein sequence ID" value="ABY45710.1"/>
    <property type="molecule type" value="Genomic_DNA"/>
</dbReference>
<dbReference type="RefSeq" id="WP_002112363.1">
    <property type="nucleotide sequence ID" value="NZ_CAKMRX030000199.1"/>
</dbReference>
<dbReference type="SMR" id="A9VL86"/>
<dbReference type="KEGG" id="bwe:BcerKBAB4_4554"/>
<dbReference type="eggNOG" id="COG0315">
    <property type="taxonomic scope" value="Bacteria"/>
</dbReference>
<dbReference type="HOGENOM" id="CLU_074693_1_1_9"/>
<dbReference type="UniPathway" id="UPA00344"/>
<dbReference type="Proteomes" id="UP000002154">
    <property type="component" value="Chromosome"/>
</dbReference>
<dbReference type="GO" id="GO:0061799">
    <property type="term" value="F:cyclic pyranopterin monophosphate synthase activity"/>
    <property type="evidence" value="ECO:0007669"/>
    <property type="project" value="UniProtKB-UniRule"/>
</dbReference>
<dbReference type="GO" id="GO:0006777">
    <property type="term" value="P:Mo-molybdopterin cofactor biosynthetic process"/>
    <property type="evidence" value="ECO:0007669"/>
    <property type="project" value="UniProtKB-UniRule"/>
</dbReference>
<dbReference type="CDD" id="cd01420">
    <property type="entry name" value="MoaC_PE"/>
    <property type="match status" value="1"/>
</dbReference>
<dbReference type="Gene3D" id="3.30.70.640">
    <property type="entry name" value="Molybdopterin cofactor biosynthesis C (MoaC) domain"/>
    <property type="match status" value="1"/>
</dbReference>
<dbReference type="HAMAP" id="MF_01224_B">
    <property type="entry name" value="MoaC_B"/>
    <property type="match status" value="1"/>
</dbReference>
<dbReference type="InterPro" id="IPR023045">
    <property type="entry name" value="MoaC"/>
</dbReference>
<dbReference type="InterPro" id="IPR047594">
    <property type="entry name" value="MoaC_bact/euk"/>
</dbReference>
<dbReference type="InterPro" id="IPR036522">
    <property type="entry name" value="MoaC_sf"/>
</dbReference>
<dbReference type="InterPro" id="IPR050105">
    <property type="entry name" value="MoCo_biosynth_MoaA/MoaC"/>
</dbReference>
<dbReference type="InterPro" id="IPR002820">
    <property type="entry name" value="Mopterin_CF_biosynth-C_dom"/>
</dbReference>
<dbReference type="NCBIfam" id="TIGR00581">
    <property type="entry name" value="moaC"/>
    <property type="match status" value="1"/>
</dbReference>
<dbReference type="NCBIfam" id="NF006870">
    <property type="entry name" value="PRK09364.1"/>
    <property type="match status" value="1"/>
</dbReference>
<dbReference type="PANTHER" id="PTHR22960:SF29">
    <property type="entry name" value="CYCLIC PYRANOPTERIN MONOPHOSPHATE SYNTHASE"/>
    <property type="match status" value="1"/>
</dbReference>
<dbReference type="PANTHER" id="PTHR22960">
    <property type="entry name" value="MOLYBDOPTERIN COFACTOR SYNTHESIS PROTEIN A"/>
    <property type="match status" value="1"/>
</dbReference>
<dbReference type="Pfam" id="PF01967">
    <property type="entry name" value="MoaC"/>
    <property type="match status" value="1"/>
</dbReference>
<dbReference type="SUPFAM" id="SSF55040">
    <property type="entry name" value="Molybdenum cofactor biosynthesis protein C, MoaC"/>
    <property type="match status" value="1"/>
</dbReference>
<evidence type="ECO:0000255" key="1">
    <source>
        <dbReference type="HAMAP-Rule" id="MF_01224"/>
    </source>
</evidence>
<reference key="1">
    <citation type="journal article" date="2008" name="Chem. Biol. Interact.">
        <title>Extending the Bacillus cereus group genomics to putative food-borne pathogens of different toxicity.</title>
        <authorList>
            <person name="Lapidus A."/>
            <person name="Goltsman E."/>
            <person name="Auger S."/>
            <person name="Galleron N."/>
            <person name="Segurens B."/>
            <person name="Dossat C."/>
            <person name="Land M.L."/>
            <person name="Broussolle V."/>
            <person name="Brillard J."/>
            <person name="Guinebretiere M.-H."/>
            <person name="Sanchis V."/>
            <person name="Nguen-the C."/>
            <person name="Lereclus D."/>
            <person name="Richardson P."/>
            <person name="Wincker P."/>
            <person name="Weissenbach J."/>
            <person name="Ehrlich S.D."/>
            <person name="Sorokin A."/>
        </authorList>
    </citation>
    <scope>NUCLEOTIDE SEQUENCE [LARGE SCALE GENOMIC DNA]</scope>
    <source>
        <strain>KBAB4</strain>
    </source>
</reference>
<keyword id="KW-0456">Lyase</keyword>
<keyword id="KW-0501">Molybdenum cofactor biosynthesis</keyword>
<proteinExistence type="inferred from homology"/>
<organism>
    <name type="scientific">Bacillus mycoides (strain KBAB4)</name>
    <name type="common">Bacillus weihenstephanensis</name>
    <dbReference type="NCBI Taxonomy" id="315730"/>
    <lineage>
        <taxon>Bacteria</taxon>
        <taxon>Bacillati</taxon>
        <taxon>Bacillota</taxon>
        <taxon>Bacilli</taxon>
        <taxon>Bacillales</taxon>
        <taxon>Bacillaceae</taxon>
        <taxon>Bacillus</taxon>
        <taxon>Bacillus cereus group</taxon>
    </lineage>
</organism>
<protein>
    <recommendedName>
        <fullName evidence="1">Cyclic pyranopterin monophosphate synthase</fullName>
        <ecNumber evidence="1">4.6.1.17</ecNumber>
    </recommendedName>
    <alternativeName>
        <fullName evidence="1">Molybdenum cofactor biosynthesis protein C</fullName>
    </alternativeName>
</protein>
<comment type="function">
    <text evidence="1">Catalyzes the conversion of (8S)-3',8-cyclo-7,8-dihydroguanosine 5'-triphosphate to cyclic pyranopterin monophosphate (cPMP).</text>
</comment>
<comment type="catalytic activity">
    <reaction evidence="1">
        <text>(8S)-3',8-cyclo-7,8-dihydroguanosine 5'-triphosphate = cyclic pyranopterin phosphate + diphosphate</text>
        <dbReference type="Rhea" id="RHEA:49580"/>
        <dbReference type="ChEBI" id="CHEBI:33019"/>
        <dbReference type="ChEBI" id="CHEBI:59648"/>
        <dbReference type="ChEBI" id="CHEBI:131766"/>
        <dbReference type="EC" id="4.6.1.17"/>
    </reaction>
</comment>
<comment type="pathway">
    <text evidence="1">Cofactor biosynthesis; molybdopterin biosynthesis.</text>
</comment>
<comment type="subunit">
    <text evidence="1">Homohexamer; trimer of dimers.</text>
</comment>
<comment type="similarity">
    <text evidence="1">Belongs to the MoaC family.</text>
</comment>
<name>MOAC_BACMK</name>
<feature type="chain" id="PRO_1000139246" description="Cyclic pyranopterin monophosphate synthase">
    <location>
        <begin position="1"/>
        <end position="161"/>
    </location>
</feature>
<feature type="active site" evidence="1">
    <location>
        <position position="130"/>
    </location>
</feature>
<feature type="binding site" evidence="1">
    <location>
        <begin position="75"/>
        <end position="77"/>
    </location>
    <ligand>
        <name>substrate</name>
    </ligand>
</feature>
<feature type="binding site" evidence="1">
    <location>
        <begin position="115"/>
        <end position="116"/>
    </location>
    <ligand>
        <name>substrate</name>
    </ligand>
</feature>